<accession>B1JIW6</accession>
<evidence type="ECO:0000255" key="1">
    <source>
        <dbReference type="HAMAP-Rule" id="MF_01331"/>
    </source>
</evidence>
<evidence type="ECO:0000305" key="2"/>
<sequence>METIAKHRHARSSAQKVRLVADLIRGKKVSQALETLTYTNKKAAGLVKKVLESAIANAEHNDGADIDDLKVTKIFVDEGPSMKRIMPRAKGRADRILKRTSHITVVVSDR</sequence>
<name>RL22_YERPY</name>
<feature type="chain" id="PRO_1000142333" description="Large ribosomal subunit protein uL22">
    <location>
        <begin position="1"/>
        <end position="110"/>
    </location>
</feature>
<organism>
    <name type="scientific">Yersinia pseudotuberculosis serotype O:3 (strain YPIII)</name>
    <dbReference type="NCBI Taxonomy" id="502800"/>
    <lineage>
        <taxon>Bacteria</taxon>
        <taxon>Pseudomonadati</taxon>
        <taxon>Pseudomonadota</taxon>
        <taxon>Gammaproteobacteria</taxon>
        <taxon>Enterobacterales</taxon>
        <taxon>Yersiniaceae</taxon>
        <taxon>Yersinia</taxon>
    </lineage>
</organism>
<keyword id="KW-0687">Ribonucleoprotein</keyword>
<keyword id="KW-0689">Ribosomal protein</keyword>
<keyword id="KW-0694">RNA-binding</keyword>
<keyword id="KW-0699">rRNA-binding</keyword>
<comment type="function">
    <text evidence="1">This protein binds specifically to 23S rRNA; its binding is stimulated by other ribosomal proteins, e.g. L4, L17, and L20. It is important during the early stages of 50S assembly. It makes multiple contacts with different domains of the 23S rRNA in the assembled 50S subunit and ribosome (By similarity).</text>
</comment>
<comment type="function">
    <text evidence="1">The globular domain of the protein is located near the polypeptide exit tunnel on the outside of the subunit, while an extended beta-hairpin is found that lines the wall of the exit tunnel in the center of the 70S ribosome.</text>
</comment>
<comment type="subunit">
    <text evidence="1">Part of the 50S ribosomal subunit.</text>
</comment>
<comment type="similarity">
    <text evidence="1">Belongs to the universal ribosomal protein uL22 family.</text>
</comment>
<reference key="1">
    <citation type="submission" date="2008-02" db="EMBL/GenBank/DDBJ databases">
        <title>Complete sequence of Yersinia pseudotuberculosis YPIII.</title>
        <authorList>
            <consortium name="US DOE Joint Genome Institute"/>
            <person name="Copeland A."/>
            <person name="Lucas S."/>
            <person name="Lapidus A."/>
            <person name="Glavina del Rio T."/>
            <person name="Dalin E."/>
            <person name="Tice H."/>
            <person name="Bruce D."/>
            <person name="Goodwin L."/>
            <person name="Pitluck S."/>
            <person name="Munk A.C."/>
            <person name="Brettin T."/>
            <person name="Detter J.C."/>
            <person name="Han C."/>
            <person name="Tapia R."/>
            <person name="Schmutz J."/>
            <person name="Larimer F."/>
            <person name="Land M."/>
            <person name="Hauser L."/>
            <person name="Challacombe J.F."/>
            <person name="Green L."/>
            <person name="Lindler L.E."/>
            <person name="Nikolich M.P."/>
            <person name="Richardson P."/>
        </authorList>
    </citation>
    <scope>NUCLEOTIDE SEQUENCE [LARGE SCALE GENOMIC DNA]</scope>
    <source>
        <strain>YPIII</strain>
    </source>
</reference>
<protein>
    <recommendedName>
        <fullName evidence="1">Large ribosomal subunit protein uL22</fullName>
    </recommendedName>
    <alternativeName>
        <fullName evidence="2">50S ribosomal protein L22</fullName>
    </alternativeName>
</protein>
<dbReference type="EMBL" id="CP000950">
    <property type="protein sequence ID" value="ACA66601.1"/>
    <property type="molecule type" value="Genomic_DNA"/>
</dbReference>
<dbReference type="RefSeq" id="WP_002223844.1">
    <property type="nucleotide sequence ID" value="NZ_CP009792.1"/>
</dbReference>
<dbReference type="SMR" id="B1JIW6"/>
<dbReference type="GeneID" id="98190601"/>
<dbReference type="KEGG" id="ypy:YPK_0288"/>
<dbReference type="PATRIC" id="fig|502800.11.peg.895"/>
<dbReference type="GO" id="GO:0022625">
    <property type="term" value="C:cytosolic large ribosomal subunit"/>
    <property type="evidence" value="ECO:0007669"/>
    <property type="project" value="TreeGrafter"/>
</dbReference>
<dbReference type="GO" id="GO:0019843">
    <property type="term" value="F:rRNA binding"/>
    <property type="evidence" value="ECO:0007669"/>
    <property type="project" value="UniProtKB-UniRule"/>
</dbReference>
<dbReference type="GO" id="GO:0003735">
    <property type="term" value="F:structural constituent of ribosome"/>
    <property type="evidence" value="ECO:0007669"/>
    <property type="project" value="InterPro"/>
</dbReference>
<dbReference type="GO" id="GO:0006412">
    <property type="term" value="P:translation"/>
    <property type="evidence" value="ECO:0007669"/>
    <property type="project" value="UniProtKB-UniRule"/>
</dbReference>
<dbReference type="CDD" id="cd00336">
    <property type="entry name" value="Ribosomal_L22"/>
    <property type="match status" value="1"/>
</dbReference>
<dbReference type="FunFam" id="3.90.470.10:FF:000001">
    <property type="entry name" value="50S ribosomal protein L22"/>
    <property type="match status" value="1"/>
</dbReference>
<dbReference type="Gene3D" id="3.90.470.10">
    <property type="entry name" value="Ribosomal protein L22/L17"/>
    <property type="match status" value="1"/>
</dbReference>
<dbReference type="HAMAP" id="MF_01331_B">
    <property type="entry name" value="Ribosomal_uL22_B"/>
    <property type="match status" value="1"/>
</dbReference>
<dbReference type="InterPro" id="IPR001063">
    <property type="entry name" value="Ribosomal_uL22"/>
</dbReference>
<dbReference type="InterPro" id="IPR005727">
    <property type="entry name" value="Ribosomal_uL22_bac/chlpt-type"/>
</dbReference>
<dbReference type="InterPro" id="IPR047867">
    <property type="entry name" value="Ribosomal_uL22_bac/org-type"/>
</dbReference>
<dbReference type="InterPro" id="IPR018260">
    <property type="entry name" value="Ribosomal_uL22_CS"/>
</dbReference>
<dbReference type="InterPro" id="IPR036394">
    <property type="entry name" value="Ribosomal_uL22_sf"/>
</dbReference>
<dbReference type="NCBIfam" id="TIGR01044">
    <property type="entry name" value="rplV_bact"/>
    <property type="match status" value="1"/>
</dbReference>
<dbReference type="PANTHER" id="PTHR13501">
    <property type="entry name" value="CHLOROPLAST 50S RIBOSOMAL PROTEIN L22-RELATED"/>
    <property type="match status" value="1"/>
</dbReference>
<dbReference type="PANTHER" id="PTHR13501:SF8">
    <property type="entry name" value="LARGE RIBOSOMAL SUBUNIT PROTEIN UL22M"/>
    <property type="match status" value="1"/>
</dbReference>
<dbReference type="Pfam" id="PF00237">
    <property type="entry name" value="Ribosomal_L22"/>
    <property type="match status" value="1"/>
</dbReference>
<dbReference type="SUPFAM" id="SSF54843">
    <property type="entry name" value="Ribosomal protein L22"/>
    <property type="match status" value="1"/>
</dbReference>
<dbReference type="PROSITE" id="PS00464">
    <property type="entry name" value="RIBOSOMAL_L22"/>
    <property type="match status" value="1"/>
</dbReference>
<gene>
    <name evidence="1" type="primary">rplV</name>
    <name type="ordered locus">YPK_0288</name>
</gene>
<proteinExistence type="inferred from homology"/>